<accession>Q6GA13</accession>
<organism>
    <name type="scientific">Staphylococcus aureus (strain MSSA476)</name>
    <dbReference type="NCBI Taxonomy" id="282459"/>
    <lineage>
        <taxon>Bacteria</taxon>
        <taxon>Bacillati</taxon>
        <taxon>Bacillota</taxon>
        <taxon>Bacilli</taxon>
        <taxon>Bacillales</taxon>
        <taxon>Staphylococcaceae</taxon>
        <taxon>Staphylococcus</taxon>
    </lineage>
</organism>
<proteinExistence type="inferred from homology"/>
<comment type="function">
    <text evidence="1">Catalyzes the condensation of carbamoyl phosphate and aspartate to form carbamoyl aspartate and inorganic phosphate, the committed step in the de novo pyrimidine nucleotide biosynthesis pathway.</text>
</comment>
<comment type="catalytic activity">
    <reaction evidence="1">
        <text>carbamoyl phosphate + L-aspartate = N-carbamoyl-L-aspartate + phosphate + H(+)</text>
        <dbReference type="Rhea" id="RHEA:20013"/>
        <dbReference type="ChEBI" id="CHEBI:15378"/>
        <dbReference type="ChEBI" id="CHEBI:29991"/>
        <dbReference type="ChEBI" id="CHEBI:32814"/>
        <dbReference type="ChEBI" id="CHEBI:43474"/>
        <dbReference type="ChEBI" id="CHEBI:58228"/>
        <dbReference type="EC" id="2.1.3.2"/>
    </reaction>
</comment>
<comment type="pathway">
    <text evidence="1">Pyrimidine metabolism; UMP biosynthesis via de novo pathway; (S)-dihydroorotate from bicarbonate: step 2/3.</text>
</comment>
<comment type="subunit">
    <text evidence="1">Heterododecamer (2C3:3R2) of six catalytic PyrB chains organized as two trimers (C3), and six regulatory PyrI chains organized as three dimers (R2).</text>
</comment>
<comment type="similarity">
    <text evidence="1">Belongs to the aspartate/ornithine carbamoyltransferase superfamily. ATCase family.</text>
</comment>
<keyword id="KW-0665">Pyrimidine biosynthesis</keyword>
<keyword id="KW-0808">Transferase</keyword>
<name>PYRB_STAAS</name>
<sequence length="293" mass="33258">MNHLLSMEHLSTDQIYKLIQKASQFKSGERQLPNFEGKYVANLFFENSTRTKCSFEMAELKLGLKTISFETSTSSVSKGESLYDTCKTLESIGCDLLVIRHPFNNYYEKLANINIPIANAGDGSGQHPTQSLLDLMTIYEEYGYFEGLNVLICGDIKNSRVARSNYHSLKALGANVMFNSPNAWIDDSLEAPYVNIDDVIETVDIVMLLRIQHERHGLAEETRFAADDYHQKHGLNEVRYNKLQEHAIVMHPAPVNRGVEIQSDLVEASKSRIFKQMENGVYLRMAVIDELLK</sequence>
<reference key="1">
    <citation type="journal article" date="2004" name="Proc. Natl. Acad. Sci. U.S.A.">
        <title>Complete genomes of two clinical Staphylococcus aureus strains: evidence for the rapid evolution of virulence and drug resistance.</title>
        <authorList>
            <person name="Holden M.T.G."/>
            <person name="Feil E.J."/>
            <person name="Lindsay J.A."/>
            <person name="Peacock S.J."/>
            <person name="Day N.P.J."/>
            <person name="Enright M.C."/>
            <person name="Foster T.J."/>
            <person name="Moore C.E."/>
            <person name="Hurst L."/>
            <person name="Atkin R."/>
            <person name="Barron A."/>
            <person name="Bason N."/>
            <person name="Bentley S.D."/>
            <person name="Chillingworth C."/>
            <person name="Chillingworth T."/>
            <person name="Churcher C."/>
            <person name="Clark L."/>
            <person name="Corton C."/>
            <person name="Cronin A."/>
            <person name="Doggett J."/>
            <person name="Dowd L."/>
            <person name="Feltwell T."/>
            <person name="Hance Z."/>
            <person name="Harris B."/>
            <person name="Hauser H."/>
            <person name="Holroyd S."/>
            <person name="Jagels K."/>
            <person name="James K.D."/>
            <person name="Lennard N."/>
            <person name="Line A."/>
            <person name="Mayes R."/>
            <person name="Moule S."/>
            <person name="Mungall K."/>
            <person name="Ormond D."/>
            <person name="Quail M.A."/>
            <person name="Rabbinowitsch E."/>
            <person name="Rutherford K.M."/>
            <person name="Sanders M."/>
            <person name="Sharp S."/>
            <person name="Simmonds M."/>
            <person name="Stevens K."/>
            <person name="Whitehead S."/>
            <person name="Barrell B.G."/>
            <person name="Spratt B.G."/>
            <person name="Parkhill J."/>
        </authorList>
    </citation>
    <scope>NUCLEOTIDE SEQUENCE [LARGE SCALE GENOMIC DNA]</scope>
    <source>
        <strain>MSSA476</strain>
    </source>
</reference>
<evidence type="ECO:0000255" key="1">
    <source>
        <dbReference type="HAMAP-Rule" id="MF_00001"/>
    </source>
</evidence>
<feature type="chain" id="PRO_0000113197" description="Aspartate carbamoyltransferase catalytic subunit">
    <location>
        <begin position="1"/>
        <end position="293"/>
    </location>
</feature>
<feature type="binding site" evidence="1">
    <location>
        <position position="50"/>
    </location>
    <ligand>
        <name>carbamoyl phosphate</name>
        <dbReference type="ChEBI" id="CHEBI:58228"/>
    </ligand>
</feature>
<feature type="binding site" evidence="1">
    <location>
        <position position="51"/>
    </location>
    <ligand>
        <name>carbamoyl phosphate</name>
        <dbReference type="ChEBI" id="CHEBI:58228"/>
    </ligand>
</feature>
<feature type="binding site" evidence="1">
    <location>
        <position position="78"/>
    </location>
    <ligand>
        <name>L-aspartate</name>
        <dbReference type="ChEBI" id="CHEBI:29991"/>
    </ligand>
</feature>
<feature type="binding site" evidence="1">
    <location>
        <position position="100"/>
    </location>
    <ligand>
        <name>carbamoyl phosphate</name>
        <dbReference type="ChEBI" id="CHEBI:58228"/>
    </ligand>
</feature>
<feature type="binding site" evidence="1">
    <location>
        <position position="127"/>
    </location>
    <ligand>
        <name>carbamoyl phosphate</name>
        <dbReference type="ChEBI" id="CHEBI:58228"/>
    </ligand>
</feature>
<feature type="binding site" evidence="1">
    <location>
        <position position="130"/>
    </location>
    <ligand>
        <name>carbamoyl phosphate</name>
        <dbReference type="ChEBI" id="CHEBI:58228"/>
    </ligand>
</feature>
<feature type="binding site" evidence="1">
    <location>
        <position position="160"/>
    </location>
    <ligand>
        <name>L-aspartate</name>
        <dbReference type="ChEBI" id="CHEBI:29991"/>
    </ligand>
</feature>
<feature type="binding site" evidence="1">
    <location>
        <position position="210"/>
    </location>
    <ligand>
        <name>L-aspartate</name>
        <dbReference type="ChEBI" id="CHEBI:29991"/>
    </ligand>
</feature>
<feature type="binding site" evidence="1">
    <location>
        <position position="253"/>
    </location>
    <ligand>
        <name>carbamoyl phosphate</name>
        <dbReference type="ChEBI" id="CHEBI:58228"/>
    </ligand>
</feature>
<feature type="binding site" evidence="1">
    <location>
        <position position="254"/>
    </location>
    <ligand>
        <name>carbamoyl phosphate</name>
        <dbReference type="ChEBI" id="CHEBI:58228"/>
    </ligand>
</feature>
<gene>
    <name evidence="1" type="primary">pyrB</name>
    <name type="ordered locus">SAS1134</name>
</gene>
<dbReference type="EC" id="2.1.3.2" evidence="1"/>
<dbReference type="EMBL" id="BX571857">
    <property type="protein sequence ID" value="CAG42911.1"/>
    <property type="molecule type" value="Genomic_DNA"/>
</dbReference>
<dbReference type="RefSeq" id="WP_001016166.1">
    <property type="nucleotide sequence ID" value="NC_002953.3"/>
</dbReference>
<dbReference type="SMR" id="Q6GA13"/>
<dbReference type="KEGG" id="sas:SAS1134"/>
<dbReference type="HOGENOM" id="CLU_043846_2_1_9"/>
<dbReference type="UniPathway" id="UPA00070">
    <property type="reaction ID" value="UER00116"/>
</dbReference>
<dbReference type="GO" id="GO:0005829">
    <property type="term" value="C:cytosol"/>
    <property type="evidence" value="ECO:0007669"/>
    <property type="project" value="TreeGrafter"/>
</dbReference>
<dbReference type="GO" id="GO:0016597">
    <property type="term" value="F:amino acid binding"/>
    <property type="evidence" value="ECO:0007669"/>
    <property type="project" value="InterPro"/>
</dbReference>
<dbReference type="GO" id="GO:0004070">
    <property type="term" value="F:aspartate carbamoyltransferase activity"/>
    <property type="evidence" value="ECO:0007669"/>
    <property type="project" value="UniProtKB-UniRule"/>
</dbReference>
<dbReference type="GO" id="GO:0006207">
    <property type="term" value="P:'de novo' pyrimidine nucleobase biosynthetic process"/>
    <property type="evidence" value="ECO:0007669"/>
    <property type="project" value="InterPro"/>
</dbReference>
<dbReference type="GO" id="GO:0044205">
    <property type="term" value="P:'de novo' UMP biosynthetic process"/>
    <property type="evidence" value="ECO:0007669"/>
    <property type="project" value="UniProtKB-UniRule"/>
</dbReference>
<dbReference type="GO" id="GO:0006520">
    <property type="term" value="P:amino acid metabolic process"/>
    <property type="evidence" value="ECO:0007669"/>
    <property type="project" value="InterPro"/>
</dbReference>
<dbReference type="FunFam" id="3.40.50.1370:FF:000011">
    <property type="entry name" value="Aspartate carbamoyltransferase"/>
    <property type="match status" value="1"/>
</dbReference>
<dbReference type="Gene3D" id="3.40.50.1370">
    <property type="entry name" value="Aspartate/ornithine carbamoyltransferase"/>
    <property type="match status" value="2"/>
</dbReference>
<dbReference type="HAMAP" id="MF_00001">
    <property type="entry name" value="Asp_carb_tr"/>
    <property type="match status" value="1"/>
</dbReference>
<dbReference type="InterPro" id="IPR006132">
    <property type="entry name" value="Asp/Orn_carbamoyltranf_P-bd"/>
</dbReference>
<dbReference type="InterPro" id="IPR006130">
    <property type="entry name" value="Asp/Orn_carbamoylTrfase"/>
</dbReference>
<dbReference type="InterPro" id="IPR036901">
    <property type="entry name" value="Asp/Orn_carbamoylTrfase_sf"/>
</dbReference>
<dbReference type="InterPro" id="IPR002082">
    <property type="entry name" value="Asp_carbamoyltransf"/>
</dbReference>
<dbReference type="InterPro" id="IPR006131">
    <property type="entry name" value="Asp_carbamoyltransf_Asp/Orn-bd"/>
</dbReference>
<dbReference type="NCBIfam" id="TIGR00670">
    <property type="entry name" value="asp_carb_tr"/>
    <property type="match status" value="1"/>
</dbReference>
<dbReference type="NCBIfam" id="NF002032">
    <property type="entry name" value="PRK00856.1"/>
    <property type="match status" value="1"/>
</dbReference>
<dbReference type="PANTHER" id="PTHR45753:SF6">
    <property type="entry name" value="ASPARTATE CARBAMOYLTRANSFERASE"/>
    <property type="match status" value="1"/>
</dbReference>
<dbReference type="PANTHER" id="PTHR45753">
    <property type="entry name" value="ORNITHINE CARBAMOYLTRANSFERASE, MITOCHONDRIAL"/>
    <property type="match status" value="1"/>
</dbReference>
<dbReference type="Pfam" id="PF00185">
    <property type="entry name" value="OTCace"/>
    <property type="match status" value="1"/>
</dbReference>
<dbReference type="Pfam" id="PF02729">
    <property type="entry name" value="OTCace_N"/>
    <property type="match status" value="1"/>
</dbReference>
<dbReference type="PRINTS" id="PR00100">
    <property type="entry name" value="AOTCASE"/>
</dbReference>
<dbReference type="PRINTS" id="PR00101">
    <property type="entry name" value="ATCASE"/>
</dbReference>
<dbReference type="SUPFAM" id="SSF53671">
    <property type="entry name" value="Aspartate/ornithine carbamoyltransferase"/>
    <property type="match status" value="1"/>
</dbReference>
<dbReference type="PROSITE" id="PS00097">
    <property type="entry name" value="CARBAMOYLTRANSFERASE"/>
    <property type="match status" value="1"/>
</dbReference>
<protein>
    <recommendedName>
        <fullName evidence="1">Aspartate carbamoyltransferase catalytic subunit</fullName>
        <ecNumber evidence="1">2.1.3.2</ecNumber>
    </recommendedName>
    <alternativeName>
        <fullName evidence="1">Aspartate transcarbamylase</fullName>
        <shortName evidence="1">ATCase</shortName>
    </alternativeName>
</protein>